<feature type="chain" id="PRO_0000293348" description="Small ribosomal subunit protein uS4">
    <location>
        <begin position="1"/>
        <end position="205"/>
    </location>
</feature>
<feature type="domain" description="S4 RNA-binding" evidence="1">
    <location>
        <begin position="94"/>
        <end position="157"/>
    </location>
</feature>
<feature type="region of interest" description="Disordered" evidence="2">
    <location>
        <begin position="1"/>
        <end position="46"/>
    </location>
</feature>
<feature type="compositionally biased region" description="Basic and acidic residues" evidence="2">
    <location>
        <begin position="1"/>
        <end position="16"/>
    </location>
</feature>
<keyword id="KW-1185">Reference proteome</keyword>
<keyword id="KW-0687">Ribonucleoprotein</keyword>
<keyword id="KW-0689">Ribosomal protein</keyword>
<keyword id="KW-0694">RNA-binding</keyword>
<keyword id="KW-0699">rRNA-binding</keyword>
<sequence>MSKRESSKYKIDRRMGENIWGRPKSPVNRREYGPGQHGQRRKGKLSDFGVQLRAKQKLKGYYGDLREKQFRAIFAEAARRKGDTSENLIGLLESRLDAIVYRAKFVPTVFAARQFVNHGHVTVNGVRVNIGSYRCKAGDVIEVREKSKQLVTVLEAVSLAERDVPDYIEVDHNKMVATFGRVPTLSDVPFPVVMEPHLVVEFYSR</sequence>
<proteinExistence type="inferred from homology"/>
<organism>
    <name type="scientific">Rhizobium etli (strain ATCC 51251 / DSM 11541 / JCM 21823 / NBRC 15573 / CFN 42)</name>
    <dbReference type="NCBI Taxonomy" id="347834"/>
    <lineage>
        <taxon>Bacteria</taxon>
        <taxon>Pseudomonadati</taxon>
        <taxon>Pseudomonadota</taxon>
        <taxon>Alphaproteobacteria</taxon>
        <taxon>Hyphomicrobiales</taxon>
        <taxon>Rhizobiaceae</taxon>
        <taxon>Rhizobium/Agrobacterium group</taxon>
        <taxon>Rhizobium</taxon>
    </lineage>
</organism>
<dbReference type="EMBL" id="CP000133">
    <property type="protein sequence ID" value="ABC91092.1"/>
    <property type="molecule type" value="Genomic_DNA"/>
</dbReference>
<dbReference type="RefSeq" id="WP_011425572.1">
    <property type="nucleotide sequence ID" value="NC_007761.1"/>
</dbReference>
<dbReference type="SMR" id="Q2K7U4"/>
<dbReference type="GeneID" id="91148815"/>
<dbReference type="KEGG" id="ret:RHE_CH02312"/>
<dbReference type="eggNOG" id="COG0522">
    <property type="taxonomic scope" value="Bacteria"/>
</dbReference>
<dbReference type="HOGENOM" id="CLU_092403_0_0_5"/>
<dbReference type="OrthoDB" id="9803672at2"/>
<dbReference type="Proteomes" id="UP000001936">
    <property type="component" value="Chromosome"/>
</dbReference>
<dbReference type="GO" id="GO:0015935">
    <property type="term" value="C:small ribosomal subunit"/>
    <property type="evidence" value="ECO:0007669"/>
    <property type="project" value="InterPro"/>
</dbReference>
<dbReference type="GO" id="GO:0019843">
    <property type="term" value="F:rRNA binding"/>
    <property type="evidence" value="ECO:0007669"/>
    <property type="project" value="UniProtKB-UniRule"/>
</dbReference>
<dbReference type="GO" id="GO:0003735">
    <property type="term" value="F:structural constituent of ribosome"/>
    <property type="evidence" value="ECO:0007669"/>
    <property type="project" value="InterPro"/>
</dbReference>
<dbReference type="GO" id="GO:0042274">
    <property type="term" value="P:ribosomal small subunit biogenesis"/>
    <property type="evidence" value="ECO:0007669"/>
    <property type="project" value="TreeGrafter"/>
</dbReference>
<dbReference type="GO" id="GO:0006412">
    <property type="term" value="P:translation"/>
    <property type="evidence" value="ECO:0007669"/>
    <property type="project" value="UniProtKB-UniRule"/>
</dbReference>
<dbReference type="CDD" id="cd00165">
    <property type="entry name" value="S4"/>
    <property type="match status" value="1"/>
</dbReference>
<dbReference type="FunFam" id="3.10.290.10:FF:000001">
    <property type="entry name" value="30S ribosomal protein S4"/>
    <property type="match status" value="1"/>
</dbReference>
<dbReference type="Gene3D" id="1.10.1050.10">
    <property type="entry name" value="Ribosomal Protein S4 Delta 41, Chain A, domain 1"/>
    <property type="match status" value="1"/>
</dbReference>
<dbReference type="Gene3D" id="3.10.290.10">
    <property type="entry name" value="RNA-binding S4 domain"/>
    <property type="match status" value="1"/>
</dbReference>
<dbReference type="HAMAP" id="MF_01306_B">
    <property type="entry name" value="Ribosomal_uS4_B"/>
    <property type="match status" value="1"/>
</dbReference>
<dbReference type="InterPro" id="IPR022801">
    <property type="entry name" value="Ribosomal_uS4"/>
</dbReference>
<dbReference type="InterPro" id="IPR005709">
    <property type="entry name" value="Ribosomal_uS4_bac-type"/>
</dbReference>
<dbReference type="InterPro" id="IPR018079">
    <property type="entry name" value="Ribosomal_uS4_CS"/>
</dbReference>
<dbReference type="InterPro" id="IPR001912">
    <property type="entry name" value="Ribosomal_uS4_N"/>
</dbReference>
<dbReference type="InterPro" id="IPR002942">
    <property type="entry name" value="S4_RNA-bd"/>
</dbReference>
<dbReference type="InterPro" id="IPR036986">
    <property type="entry name" value="S4_RNA-bd_sf"/>
</dbReference>
<dbReference type="NCBIfam" id="NF003717">
    <property type="entry name" value="PRK05327.1"/>
    <property type="match status" value="1"/>
</dbReference>
<dbReference type="NCBIfam" id="TIGR01017">
    <property type="entry name" value="rpsD_bact"/>
    <property type="match status" value="1"/>
</dbReference>
<dbReference type="PANTHER" id="PTHR11831">
    <property type="entry name" value="30S 40S RIBOSOMAL PROTEIN"/>
    <property type="match status" value="1"/>
</dbReference>
<dbReference type="PANTHER" id="PTHR11831:SF4">
    <property type="entry name" value="SMALL RIBOSOMAL SUBUNIT PROTEIN US4M"/>
    <property type="match status" value="1"/>
</dbReference>
<dbReference type="Pfam" id="PF00163">
    <property type="entry name" value="Ribosomal_S4"/>
    <property type="match status" value="1"/>
</dbReference>
<dbReference type="Pfam" id="PF01479">
    <property type="entry name" value="S4"/>
    <property type="match status" value="1"/>
</dbReference>
<dbReference type="SMART" id="SM01390">
    <property type="entry name" value="Ribosomal_S4"/>
    <property type="match status" value="1"/>
</dbReference>
<dbReference type="SMART" id="SM00363">
    <property type="entry name" value="S4"/>
    <property type="match status" value="1"/>
</dbReference>
<dbReference type="SUPFAM" id="SSF55174">
    <property type="entry name" value="Alpha-L RNA-binding motif"/>
    <property type="match status" value="1"/>
</dbReference>
<dbReference type="PROSITE" id="PS00632">
    <property type="entry name" value="RIBOSOMAL_S4"/>
    <property type="match status" value="1"/>
</dbReference>
<dbReference type="PROSITE" id="PS50889">
    <property type="entry name" value="S4"/>
    <property type="match status" value="1"/>
</dbReference>
<gene>
    <name evidence="1" type="primary">rpsD</name>
    <name type="ordered locus">RHE_CH02312</name>
</gene>
<protein>
    <recommendedName>
        <fullName evidence="1">Small ribosomal subunit protein uS4</fullName>
    </recommendedName>
    <alternativeName>
        <fullName evidence="3">30S ribosomal protein S4</fullName>
    </alternativeName>
</protein>
<reference key="1">
    <citation type="journal article" date="2006" name="Proc. Natl. Acad. Sci. U.S.A.">
        <title>The partitioned Rhizobium etli genome: genetic and metabolic redundancy in seven interacting replicons.</title>
        <authorList>
            <person name="Gonzalez V."/>
            <person name="Santamaria R.I."/>
            <person name="Bustos P."/>
            <person name="Hernandez-Gonzalez I."/>
            <person name="Medrano-Soto A."/>
            <person name="Moreno-Hagelsieb G."/>
            <person name="Janga S.C."/>
            <person name="Ramirez M.A."/>
            <person name="Jimenez-Jacinto V."/>
            <person name="Collado-Vides J."/>
            <person name="Davila G."/>
        </authorList>
    </citation>
    <scope>NUCLEOTIDE SEQUENCE [LARGE SCALE GENOMIC DNA]</scope>
    <source>
        <strain>ATCC 51251 / DSM 11541 / JCM 21823 / NBRC 15573 / CFN 42</strain>
    </source>
</reference>
<name>RS4_RHIEC</name>
<comment type="function">
    <text evidence="1">One of the primary rRNA binding proteins, it binds directly to 16S rRNA where it nucleates assembly of the body of the 30S subunit.</text>
</comment>
<comment type="function">
    <text evidence="1">With S5 and S12 plays an important role in translational accuracy.</text>
</comment>
<comment type="subunit">
    <text evidence="1">Part of the 30S ribosomal subunit. Contacts protein S5. The interaction surface between S4 and S5 is involved in control of translational fidelity.</text>
</comment>
<comment type="similarity">
    <text evidence="1">Belongs to the universal ribosomal protein uS4 family.</text>
</comment>
<evidence type="ECO:0000255" key="1">
    <source>
        <dbReference type="HAMAP-Rule" id="MF_01306"/>
    </source>
</evidence>
<evidence type="ECO:0000256" key="2">
    <source>
        <dbReference type="SAM" id="MobiDB-lite"/>
    </source>
</evidence>
<evidence type="ECO:0000305" key="3"/>
<accession>Q2K7U4</accession>